<dbReference type="EMBL" id="AF469716">
    <property type="protein sequence ID" value="AAQ05233.1"/>
    <property type="molecule type" value="Genomic_DNA"/>
</dbReference>
<dbReference type="RefSeq" id="YP_007474638.1">
    <property type="nucleotide sequence ID" value="NC_020319.1"/>
</dbReference>
<dbReference type="SMR" id="Q71L71"/>
<dbReference type="GeneID" id="14657462"/>
<dbReference type="GO" id="GO:0009535">
    <property type="term" value="C:chloroplast thylakoid membrane"/>
    <property type="evidence" value="ECO:0007669"/>
    <property type="project" value="UniProtKB-SubCell"/>
</dbReference>
<dbReference type="GO" id="GO:0009539">
    <property type="term" value="C:photosystem II reaction center"/>
    <property type="evidence" value="ECO:0007669"/>
    <property type="project" value="InterPro"/>
</dbReference>
<dbReference type="GO" id="GO:0009055">
    <property type="term" value="F:electron transfer activity"/>
    <property type="evidence" value="ECO:0007669"/>
    <property type="project" value="UniProtKB-UniRule"/>
</dbReference>
<dbReference type="GO" id="GO:0020037">
    <property type="term" value="F:heme binding"/>
    <property type="evidence" value="ECO:0007669"/>
    <property type="project" value="InterPro"/>
</dbReference>
<dbReference type="GO" id="GO:0005506">
    <property type="term" value="F:iron ion binding"/>
    <property type="evidence" value="ECO:0007669"/>
    <property type="project" value="UniProtKB-UniRule"/>
</dbReference>
<dbReference type="GO" id="GO:0009767">
    <property type="term" value="P:photosynthetic electron transport chain"/>
    <property type="evidence" value="ECO:0007669"/>
    <property type="project" value="InterPro"/>
</dbReference>
<dbReference type="HAMAP" id="MF_00643">
    <property type="entry name" value="PSII_PsbF"/>
    <property type="match status" value="1"/>
</dbReference>
<dbReference type="InterPro" id="IPR006241">
    <property type="entry name" value="PSII_cyt_b559_bsu"/>
</dbReference>
<dbReference type="InterPro" id="IPR006216">
    <property type="entry name" value="PSII_cyt_b559_CS"/>
</dbReference>
<dbReference type="InterPro" id="IPR013081">
    <property type="entry name" value="PSII_cyt_b559_N"/>
</dbReference>
<dbReference type="NCBIfam" id="TIGR01333">
    <property type="entry name" value="cyt_b559_beta"/>
    <property type="match status" value="1"/>
</dbReference>
<dbReference type="Pfam" id="PF00283">
    <property type="entry name" value="Cytochrom_B559"/>
    <property type="match status" value="1"/>
</dbReference>
<dbReference type="PIRSF" id="PIRSF000037">
    <property type="entry name" value="PsbF"/>
    <property type="match status" value="1"/>
</dbReference>
<dbReference type="SUPFAM" id="SSF161045">
    <property type="entry name" value="Cytochrome b559 subunits"/>
    <property type="match status" value="1"/>
</dbReference>
<dbReference type="PROSITE" id="PS00537">
    <property type="entry name" value="CYTOCHROME_B559"/>
    <property type="match status" value="1"/>
</dbReference>
<proteinExistence type="inferred from homology"/>
<evidence type="ECO:0000255" key="1">
    <source>
        <dbReference type="HAMAP-Rule" id="MF_00643"/>
    </source>
</evidence>
<gene>
    <name evidence="1" type="primary">psbF</name>
</gene>
<reference key="1">
    <citation type="journal article" date="2003" name="Mol. Phylogenet. Evol.">
        <title>Inference of higher-order relationships in the cycads from a large chloroplast data set.</title>
        <authorList>
            <person name="Rai H.S."/>
            <person name="O'Brien H.E."/>
            <person name="Reeves P.A."/>
            <person name="Olmstead R.G."/>
            <person name="Graham S.W."/>
        </authorList>
    </citation>
    <scope>NUCLEOTIDE SEQUENCE [GENOMIC DNA]</scope>
</reference>
<comment type="function">
    <text evidence="1">This b-type cytochrome is tightly associated with the reaction center of photosystem II (PSII). PSII is a light-driven water:plastoquinone oxidoreductase that uses light energy to abstract electrons from H(2)O, generating O(2) and a proton gradient subsequently used for ATP formation. It consists of a core antenna complex that captures photons, and an electron transfer chain that converts photonic excitation into a charge separation.</text>
</comment>
<comment type="cofactor">
    <cofactor evidence="1">
        <name>heme b</name>
        <dbReference type="ChEBI" id="CHEBI:60344"/>
    </cofactor>
    <text evidence="1">With its partner (PsbE) binds heme. PSII binds additional chlorophylls, carotenoids and specific lipids.</text>
</comment>
<comment type="subunit">
    <text evidence="1">Heterodimer of an alpha subunit and a beta subunit. PSII is composed of 1 copy each of membrane proteins PsbA, PsbB, PsbC, PsbD, PsbE, PsbF, PsbH, PsbI, PsbJ, PsbK, PsbL, PsbM, PsbT, PsbX, PsbY, PsbZ, Psb30/Ycf12, at least 3 peripheral proteins of the oxygen-evolving complex and a large number of cofactors. It forms dimeric complexes.</text>
</comment>
<comment type="subcellular location">
    <subcellularLocation>
        <location evidence="1">Plastid</location>
        <location evidence="1">Chloroplast thylakoid membrane</location>
        <topology evidence="1">Single-pass membrane protein</topology>
    </subcellularLocation>
</comment>
<comment type="similarity">
    <text evidence="1">Belongs to the PsbE/PsbF family.</text>
</comment>
<accession>Q71L71</accession>
<name>PSBF_CYCRE</name>
<geneLocation type="chloroplast"/>
<organism>
    <name type="scientific">Cycas revoluta</name>
    <name type="common">Sago palm</name>
    <dbReference type="NCBI Taxonomy" id="3396"/>
    <lineage>
        <taxon>Eukaryota</taxon>
        <taxon>Viridiplantae</taxon>
        <taxon>Streptophyta</taxon>
        <taxon>Embryophyta</taxon>
        <taxon>Tracheophyta</taxon>
        <taxon>Spermatophyta</taxon>
        <taxon>Cycadidae</taxon>
        <taxon>Cycadales</taxon>
        <taxon>Cycadaceae</taxon>
        <taxon>Cycas</taxon>
    </lineage>
</organism>
<sequence length="39" mass="4484">MTIDRTYPIFTVRWLAVHGLAVPTVFFLGSISAMQFIQR</sequence>
<protein>
    <recommendedName>
        <fullName evidence="1">Cytochrome b559 subunit beta</fullName>
    </recommendedName>
    <alternativeName>
        <fullName evidence="1">PSII reaction center subunit VI</fullName>
    </alternativeName>
</protein>
<keyword id="KW-0150">Chloroplast</keyword>
<keyword id="KW-0249">Electron transport</keyword>
<keyword id="KW-0349">Heme</keyword>
<keyword id="KW-0408">Iron</keyword>
<keyword id="KW-0472">Membrane</keyword>
<keyword id="KW-0479">Metal-binding</keyword>
<keyword id="KW-0602">Photosynthesis</keyword>
<keyword id="KW-0604">Photosystem II</keyword>
<keyword id="KW-0934">Plastid</keyword>
<keyword id="KW-0793">Thylakoid</keyword>
<keyword id="KW-0812">Transmembrane</keyword>
<keyword id="KW-1133">Transmembrane helix</keyword>
<keyword id="KW-0813">Transport</keyword>
<feature type="chain" id="PRO_0000200386" description="Cytochrome b559 subunit beta">
    <location>
        <begin position="1"/>
        <end position="39"/>
    </location>
</feature>
<feature type="transmembrane region" description="Helical" evidence="1">
    <location>
        <begin position="14"/>
        <end position="30"/>
    </location>
</feature>
<feature type="binding site" description="axial binding residue" evidence="1">
    <location>
        <position position="18"/>
    </location>
    <ligand>
        <name>heme</name>
        <dbReference type="ChEBI" id="CHEBI:30413"/>
        <note>ligand shared with alpha subunit</note>
    </ligand>
    <ligandPart>
        <name>Fe</name>
        <dbReference type="ChEBI" id="CHEBI:18248"/>
    </ligandPart>
</feature>